<sequence>MKIFSILLVALIICSISICTEAFGLIDVKCFASSECWTACKKVTGSGQGKCQNNQCRCY</sequence>
<name>KA162_OLIMR</name>
<feature type="signal peptide" evidence="2 3">
    <location>
        <begin position="1"/>
        <end position="22"/>
    </location>
</feature>
<feature type="peptide" id="PRO_0000035321" description="Potassium channel toxin alpha-KTx 16.2">
    <location>
        <begin position="23"/>
        <end position="59"/>
    </location>
</feature>
<feature type="peptide" id="PRO_0000035322" description="Martentoxin-1">
    <location>
        <begin position="24"/>
        <end position="59"/>
    </location>
</feature>
<feature type="peptide" id="PRO_0000431603" description="Martentoxin-b">
    <location>
        <begin position="25"/>
        <end position="59"/>
    </location>
</feature>
<feature type="site" description="Important for the inhibitory effect on KCNMA1 channels">
    <location>
        <position position="38"/>
    </location>
</feature>
<feature type="site" description="Basic residue of the functional dyad" evidence="1">
    <location>
        <position position="50"/>
    </location>
</feature>
<feature type="site" description="Aromatic residue of the functional dyad" evidence="1">
    <location>
        <position position="59"/>
    </location>
</feature>
<feature type="disulfide bond" evidence="4">
    <location>
        <begin position="30"/>
        <end position="51"/>
    </location>
</feature>
<feature type="disulfide bond" evidence="4">
    <location>
        <begin position="36"/>
        <end position="56"/>
    </location>
</feature>
<feature type="disulfide bond" evidence="4">
    <location>
        <begin position="40"/>
        <end position="58"/>
    </location>
</feature>
<feature type="helix" evidence="8">
    <location>
        <begin position="33"/>
        <end position="43"/>
    </location>
</feature>
<feature type="strand" evidence="8">
    <location>
        <begin position="49"/>
        <end position="52"/>
    </location>
</feature>
<feature type="strand" evidence="8">
    <location>
        <begin position="55"/>
        <end position="58"/>
    </location>
</feature>
<accession>Q9NBG9</accession>
<accession>D9IAV9</accession>
<accession>F5CJV9</accession>
<keyword id="KW-0002">3D-structure</keyword>
<keyword id="KW-1221">Calcium-activated potassium channel impairing toxin</keyword>
<keyword id="KW-0903">Direct protein sequencing</keyword>
<keyword id="KW-1015">Disulfide bond</keyword>
<keyword id="KW-0872">Ion channel impairing toxin</keyword>
<keyword id="KW-0528">Neurotoxin</keyword>
<keyword id="KW-0632">Potassium channel impairing toxin</keyword>
<keyword id="KW-0964">Secreted</keyword>
<keyword id="KW-0732">Signal</keyword>
<keyword id="KW-0800">Toxin</keyword>
<keyword id="KW-0738">Voltage-gated sodium channel impairing toxin</keyword>
<protein>
    <recommendedName>
        <fullName>Potassium channel toxin alpha-KTx 16.2</fullName>
    </recommendedName>
    <alternativeName>
        <fullName>BmK 622</fullName>
    </alternativeName>
    <alternativeName>
        <fullName>BmTx3B</fullName>
    </alternativeName>
    <alternativeName>
        <fullName>Martentoxin</fullName>
    </alternativeName>
    <component>
        <recommendedName>
            <fullName>Martentoxin-1</fullName>
        </recommendedName>
        <alternativeName>
            <fullName>Martentoxin I</fullName>
        </alternativeName>
    </component>
    <component>
        <recommendedName>
            <fullName>Martentoxin-b</fullName>
        </recommendedName>
    </component>
</protein>
<evidence type="ECO:0000250" key="1"/>
<evidence type="ECO:0000269" key="2">
    <source>
    </source>
</evidence>
<evidence type="ECO:0000269" key="3">
    <source>
    </source>
</evidence>
<evidence type="ECO:0000269" key="4">
    <source>
    </source>
</evidence>
<evidence type="ECO:0000269" key="5">
    <source>
    </source>
</evidence>
<evidence type="ECO:0000269" key="6">
    <source>
    </source>
</evidence>
<evidence type="ECO:0000305" key="7"/>
<evidence type="ECO:0007829" key="8">
    <source>
        <dbReference type="PDB" id="1M2S"/>
    </source>
</evidence>
<reference key="1">
    <citation type="journal article" date="2003" name="J. Neurochem.">
        <title>Martentoxin, a novel K+-channel-blocking peptide: purification, cDNA and genomic cloning, and electrophysiological and pharmacological characterization.</title>
        <authorList>
            <person name="Ji Y.-H."/>
            <person name="Wang W.-X."/>
            <person name="Ye J.-G."/>
            <person name="He L.-L."/>
            <person name="Li Y.-J."/>
            <person name="Yan Y.-P."/>
            <person name="Zhou Z."/>
        </authorList>
    </citation>
    <scope>NUCLEOTIDE SEQUENCE [GENOMIC DNA / MRNA]</scope>
    <scope>PROTEIN SEQUENCE OF 23-59</scope>
    <scope>MASS SPECTROMETRY</scope>
    <scope>FUNCTION</scope>
    <source>
        <tissue>Venom</tissue>
        <tissue>Venom gland</tissue>
    </source>
</reference>
<reference key="2">
    <citation type="journal article" date="2011" name="Comp. Biochem. Physiol.">
        <title>Molecular divergence of two orthologous scorpion toxins affecting potassium channels.</title>
        <authorList>
            <person name="Gao B."/>
            <person name="Peigneur S."/>
            <person name="Dalziel J."/>
            <person name="Tytgat J."/>
            <person name="Zhu S."/>
        </authorList>
    </citation>
    <scope>NUCLEOTIDE SEQUENCE [MRNA]</scope>
    <scope>SITE THR-38</scope>
    <source>
        <tissue>Venom gland</tissue>
    </source>
</reference>
<reference key="3">
    <citation type="journal article" date="2003" name="J. Pept. Res.">
        <title>Purification, characterization of two peptides from Buthus martensi Karch.</title>
        <authorList>
            <person name="Cao Z.Y."/>
            <person name="Shen W.Q."/>
            <person name="Pan Y.P."/>
            <person name="Xiao X."/>
            <person name="Liu X.M."/>
            <person name="Wang X.L."/>
            <person name="Liang X.T."/>
            <person name="Yu D.Q."/>
        </authorList>
    </citation>
    <scope>PROTEIN SEQUENCE OF 23-59</scope>
    <scope>FUNCTION</scope>
    <scope>MASS SPECTROMETRY</scope>
    <source>
        <tissue>Venom</tissue>
    </source>
</reference>
<reference key="4">
    <citation type="journal article" date="2012" name="Proteomics">
        <title>Short-chain peptides identification of scorpion Buthus martensi Karsch venom by employing high orthogonal 2D-HPLC system and tandem mass spectrometry.</title>
        <authorList>
            <person name="Xu J."/>
            <person name="Zhang X."/>
            <person name="Guo Z."/>
            <person name="Yan J."/>
            <person name="Yu L."/>
            <person name="Li X."/>
            <person name="Xue X."/>
            <person name="Liang X."/>
        </authorList>
    </citation>
    <scope>MASS SPECTROMETRY</scope>
    <source>
        <tissue>Venom</tissue>
    </source>
</reference>
<reference key="5">
    <citation type="journal article" date="2008" name="Biophys. J.">
        <title>Inhibition of martentoxin on neuronal BK channel subtype (alpha+beta4): implications for a novel interaction model.</title>
        <authorList>
            <person name="Shi J."/>
            <person name="He H.Q."/>
            <person name="Zhao R."/>
            <person name="Duan Y.-H."/>
            <person name="Chen J."/>
            <person name="Chen Y."/>
            <person name="Yang J."/>
            <person name="Zhang J.W."/>
            <person name="Shu X.Q."/>
            <person name="Zheng P."/>
            <person name="Ji Y.H."/>
        </authorList>
    </citation>
    <scope>FUNCTION</scope>
</reference>
<reference key="6">
    <citation type="journal article" date="2005" name="Proteins">
        <title>The solution structure of BmTx3B, a member of the scorpion toxin subfamily alpha-KTx 16.</title>
        <authorList>
            <person name="Wang Y."/>
            <person name="Chen X."/>
            <person name="Zhang N."/>
            <person name="Wu G."/>
            <person name="Wu H."/>
        </authorList>
    </citation>
    <scope>STRUCTURE BY NMR OF 23-59</scope>
    <scope>DISULFIDE BONDS</scope>
</reference>
<dbReference type="EMBL" id="AF249746">
    <property type="protein sequence ID" value="AAF87224.1"/>
    <property type="molecule type" value="mRNA"/>
</dbReference>
<dbReference type="EMBL" id="AF534113">
    <property type="protein sequence ID" value="AAM97931.1"/>
    <property type="molecule type" value="Genomic_DNA"/>
</dbReference>
<dbReference type="EMBL" id="JF719810">
    <property type="protein sequence ID" value="AEC22866.1"/>
    <property type="molecule type" value="mRNA"/>
</dbReference>
<dbReference type="EMBL" id="HM131808">
    <property type="protein sequence ID" value="ADJ17366.1"/>
    <property type="molecule type" value="mRNA"/>
</dbReference>
<dbReference type="EMBL" id="HM197724">
    <property type="protein sequence ID" value="ADK13081.1"/>
    <property type="molecule type" value="mRNA"/>
</dbReference>
<dbReference type="EMBL" id="HM197725">
    <property type="protein sequence ID" value="ADK13082.1"/>
    <property type="molecule type" value="mRNA"/>
</dbReference>
<dbReference type="EMBL" id="HM197726">
    <property type="protein sequence ID" value="ADK13083.1"/>
    <property type="molecule type" value="mRNA"/>
</dbReference>
<dbReference type="EMBL" id="HM197727">
    <property type="protein sequence ID" value="ADK13084.1"/>
    <property type="molecule type" value="mRNA"/>
</dbReference>
<dbReference type="EMBL" id="HM197728">
    <property type="protein sequence ID" value="ADK13085.1"/>
    <property type="molecule type" value="mRNA"/>
</dbReference>
<dbReference type="EMBL" id="HM197729">
    <property type="protein sequence ID" value="ADK13086.1"/>
    <property type="molecule type" value="mRNA"/>
</dbReference>
<dbReference type="EMBL" id="HM197730">
    <property type="protein sequence ID" value="ADK13087.1"/>
    <property type="molecule type" value="mRNA"/>
</dbReference>
<dbReference type="PDB" id="1M2S">
    <property type="method" value="NMR"/>
    <property type="chains" value="A=23-59"/>
</dbReference>
<dbReference type="PDBsum" id="1M2S"/>
<dbReference type="SMR" id="Q9NBG9"/>
<dbReference type="TCDB" id="8.B.8.1.5">
    <property type="family name" value="the Alpha-ktx15 scorpion toxin (Alpha-ktx15) family"/>
</dbReference>
<dbReference type="EvolutionaryTrace" id="Q9NBG9"/>
<dbReference type="GO" id="GO:0005576">
    <property type="term" value="C:extracellular region"/>
    <property type="evidence" value="ECO:0007669"/>
    <property type="project" value="UniProtKB-SubCell"/>
</dbReference>
<dbReference type="GO" id="GO:0008200">
    <property type="term" value="F:ion channel inhibitor activity"/>
    <property type="evidence" value="ECO:0007669"/>
    <property type="project" value="InterPro"/>
</dbReference>
<dbReference type="GO" id="GO:0015459">
    <property type="term" value="F:potassium channel regulator activity"/>
    <property type="evidence" value="ECO:0007669"/>
    <property type="project" value="UniProtKB-KW"/>
</dbReference>
<dbReference type="GO" id="GO:0017080">
    <property type="term" value="F:sodium channel regulator activity"/>
    <property type="evidence" value="ECO:0007669"/>
    <property type="project" value="UniProtKB-KW"/>
</dbReference>
<dbReference type="GO" id="GO:0090729">
    <property type="term" value="F:toxin activity"/>
    <property type="evidence" value="ECO:0007669"/>
    <property type="project" value="UniProtKB-KW"/>
</dbReference>
<dbReference type="Gene3D" id="3.30.30.10">
    <property type="entry name" value="Knottin, scorpion toxin-like"/>
    <property type="match status" value="1"/>
</dbReference>
<dbReference type="InterPro" id="IPR036574">
    <property type="entry name" value="Scorpion_toxin-like_sf"/>
</dbReference>
<dbReference type="InterPro" id="IPR001947">
    <property type="entry name" value="Scorpion_toxinS_K_inh"/>
</dbReference>
<dbReference type="Pfam" id="PF00451">
    <property type="entry name" value="Toxin_2"/>
    <property type="match status" value="1"/>
</dbReference>
<dbReference type="SUPFAM" id="SSF57095">
    <property type="entry name" value="Scorpion toxin-like"/>
    <property type="match status" value="1"/>
</dbReference>
<dbReference type="PROSITE" id="PS01138">
    <property type="entry name" value="SCORP_SHORT_TOXIN"/>
    <property type="match status" value="1"/>
</dbReference>
<organism>
    <name type="scientific">Olivierus martensii</name>
    <name type="common">Manchurian scorpion</name>
    <name type="synonym">Mesobuthus martensii</name>
    <dbReference type="NCBI Taxonomy" id="34649"/>
    <lineage>
        <taxon>Eukaryota</taxon>
        <taxon>Metazoa</taxon>
        <taxon>Ecdysozoa</taxon>
        <taxon>Arthropoda</taxon>
        <taxon>Chelicerata</taxon>
        <taxon>Arachnida</taxon>
        <taxon>Scorpiones</taxon>
        <taxon>Buthida</taxon>
        <taxon>Buthoidea</taxon>
        <taxon>Buthidae</taxon>
        <taxon>Olivierus</taxon>
    </lineage>
</organism>
<proteinExistence type="evidence at protein level"/>
<comment type="function">
    <text evidence="3 5">Alpha-KTx 16.2: inhibits large conductance calcium-activated potassium channels (KCa1.1/Slo-beta4 KCNMA1/KCNMB4). It appears to block channel activity by a simple bimolecular inhibition process. Shows a fast association rate and a slow dissociation rate of binding on rat brain synaptosome (PubMed:18199674). Significantly inhibits voltage-dependent sodium current and voltage-dependent delayed rectifier potassium currents (PubMed:14632928).</text>
</comment>
<comment type="function">
    <molecule>Martentoxin-1</molecule>
    <text evidence="3">Significantly inhibits voltage-dependent sodium current (Nav) and voltage-dependent delayed rectifier potassium current.</text>
</comment>
<comment type="subcellular location">
    <subcellularLocation>
        <location>Secreted</location>
    </subcellularLocation>
</comment>
<comment type="tissue specificity">
    <text>Expressed by the venom gland.</text>
</comment>
<comment type="domain">
    <text evidence="4">Has the structural arrangement of an alpha-helix connected to a beta-sheet by disulfide bonds (CSalpha/beta).</text>
</comment>
<comment type="mass spectrometry">
    <molecule>Potassium channel toxin alpha-KTx 16.2</molecule>
</comment>
<comment type="mass spectrometry">
    <molecule>Potassium channel toxin alpha-KTx 16.2</molecule>
</comment>
<comment type="mass spectrometry">
    <molecule>Martentoxin-b</molecule>
    <text>Monoisotopic mass.</text>
</comment>
<comment type="mass spectrometry">
    <molecule>Martentoxin-1</molecule>
</comment>
<comment type="similarity">
    <text evidence="7">Belongs to the short scorpion toxin superfamily. Potassium channel inhibitor family. Alpha-KTx 16 subfamily.</text>
</comment>